<reference key="1">
    <citation type="submission" date="2008-08" db="EMBL/GenBank/DDBJ databases">
        <title>Complete sequence of Vibrio fischeri strain MJ11.</title>
        <authorList>
            <person name="Mandel M.J."/>
            <person name="Stabb E.V."/>
            <person name="Ruby E.G."/>
            <person name="Ferriera S."/>
            <person name="Johnson J."/>
            <person name="Kravitz S."/>
            <person name="Beeson K."/>
            <person name="Sutton G."/>
            <person name="Rogers Y.-H."/>
            <person name="Friedman R."/>
            <person name="Frazier M."/>
            <person name="Venter J.C."/>
        </authorList>
    </citation>
    <scope>NUCLEOTIDE SEQUENCE [LARGE SCALE GENOMIC DNA]</scope>
    <source>
        <strain>MJ11</strain>
    </source>
</reference>
<keyword id="KW-0227">DNA damage</keyword>
<keyword id="KW-0233">DNA recombination</keyword>
<keyword id="KW-0234">DNA repair</keyword>
<keyword id="KW-0479">Metal-binding</keyword>
<keyword id="KW-0862">Zinc</keyword>
<keyword id="KW-0863">Zinc-finger</keyword>
<dbReference type="EMBL" id="CP001139">
    <property type="protein sequence ID" value="ACH65258.1"/>
    <property type="molecule type" value="Genomic_DNA"/>
</dbReference>
<dbReference type="RefSeq" id="WP_011262239.1">
    <property type="nucleotide sequence ID" value="NC_011184.1"/>
</dbReference>
<dbReference type="SMR" id="B5FFM4"/>
<dbReference type="GeneID" id="54164379"/>
<dbReference type="KEGG" id="vfm:VFMJ11_1809"/>
<dbReference type="HOGENOM" id="CLU_060739_1_2_6"/>
<dbReference type="Proteomes" id="UP000001857">
    <property type="component" value="Chromosome I"/>
</dbReference>
<dbReference type="GO" id="GO:0003677">
    <property type="term" value="F:DNA binding"/>
    <property type="evidence" value="ECO:0007669"/>
    <property type="project" value="UniProtKB-UniRule"/>
</dbReference>
<dbReference type="GO" id="GO:0008270">
    <property type="term" value="F:zinc ion binding"/>
    <property type="evidence" value="ECO:0007669"/>
    <property type="project" value="UniProtKB-KW"/>
</dbReference>
<dbReference type="GO" id="GO:0006310">
    <property type="term" value="P:DNA recombination"/>
    <property type="evidence" value="ECO:0007669"/>
    <property type="project" value="UniProtKB-UniRule"/>
</dbReference>
<dbReference type="GO" id="GO:0006281">
    <property type="term" value="P:DNA repair"/>
    <property type="evidence" value="ECO:0007669"/>
    <property type="project" value="UniProtKB-UniRule"/>
</dbReference>
<dbReference type="CDD" id="cd01025">
    <property type="entry name" value="TOPRIM_recR"/>
    <property type="match status" value="1"/>
</dbReference>
<dbReference type="FunFam" id="1.10.8.420:FF:000001">
    <property type="entry name" value="Recombination protein RecR"/>
    <property type="match status" value="1"/>
</dbReference>
<dbReference type="FunFam" id="3.40.1360.10:FF:000001">
    <property type="entry name" value="Recombination protein RecR"/>
    <property type="match status" value="1"/>
</dbReference>
<dbReference type="Gene3D" id="3.40.1360.10">
    <property type="match status" value="1"/>
</dbReference>
<dbReference type="Gene3D" id="6.10.250.240">
    <property type="match status" value="1"/>
</dbReference>
<dbReference type="Gene3D" id="1.10.8.420">
    <property type="entry name" value="RecR Domain 1"/>
    <property type="match status" value="1"/>
</dbReference>
<dbReference type="HAMAP" id="MF_00017">
    <property type="entry name" value="RecR"/>
    <property type="match status" value="1"/>
</dbReference>
<dbReference type="InterPro" id="IPR000093">
    <property type="entry name" value="DNA_Rcmb_RecR"/>
</dbReference>
<dbReference type="InterPro" id="IPR023627">
    <property type="entry name" value="Rcmb_RecR"/>
</dbReference>
<dbReference type="InterPro" id="IPR015967">
    <property type="entry name" value="Rcmb_RecR_Znf"/>
</dbReference>
<dbReference type="InterPro" id="IPR006171">
    <property type="entry name" value="TOPRIM_dom"/>
</dbReference>
<dbReference type="InterPro" id="IPR034137">
    <property type="entry name" value="TOPRIM_RecR"/>
</dbReference>
<dbReference type="NCBIfam" id="TIGR00615">
    <property type="entry name" value="recR"/>
    <property type="match status" value="1"/>
</dbReference>
<dbReference type="PANTHER" id="PTHR30446">
    <property type="entry name" value="RECOMBINATION PROTEIN RECR"/>
    <property type="match status" value="1"/>
</dbReference>
<dbReference type="PANTHER" id="PTHR30446:SF0">
    <property type="entry name" value="RECOMBINATION PROTEIN RECR"/>
    <property type="match status" value="1"/>
</dbReference>
<dbReference type="Pfam" id="PF21175">
    <property type="entry name" value="RecR_C"/>
    <property type="match status" value="1"/>
</dbReference>
<dbReference type="Pfam" id="PF21176">
    <property type="entry name" value="RecR_HhH"/>
    <property type="match status" value="1"/>
</dbReference>
<dbReference type="Pfam" id="PF02132">
    <property type="entry name" value="RecR_ZnF"/>
    <property type="match status" value="1"/>
</dbReference>
<dbReference type="Pfam" id="PF13662">
    <property type="entry name" value="Toprim_4"/>
    <property type="match status" value="1"/>
</dbReference>
<dbReference type="SMART" id="SM00493">
    <property type="entry name" value="TOPRIM"/>
    <property type="match status" value="1"/>
</dbReference>
<dbReference type="SUPFAM" id="SSF111304">
    <property type="entry name" value="Recombination protein RecR"/>
    <property type="match status" value="1"/>
</dbReference>
<dbReference type="PROSITE" id="PS01300">
    <property type="entry name" value="RECR"/>
    <property type="match status" value="1"/>
</dbReference>
<dbReference type="PROSITE" id="PS50880">
    <property type="entry name" value="TOPRIM"/>
    <property type="match status" value="1"/>
</dbReference>
<organism>
    <name type="scientific">Aliivibrio fischeri (strain MJ11)</name>
    <name type="common">Vibrio fischeri</name>
    <dbReference type="NCBI Taxonomy" id="388396"/>
    <lineage>
        <taxon>Bacteria</taxon>
        <taxon>Pseudomonadati</taxon>
        <taxon>Pseudomonadota</taxon>
        <taxon>Gammaproteobacteria</taxon>
        <taxon>Vibrionales</taxon>
        <taxon>Vibrionaceae</taxon>
        <taxon>Aliivibrio</taxon>
    </lineage>
</organism>
<protein>
    <recommendedName>
        <fullName evidence="1">Recombination protein RecR</fullName>
    </recommendedName>
</protein>
<evidence type="ECO:0000255" key="1">
    <source>
        <dbReference type="HAMAP-Rule" id="MF_00017"/>
    </source>
</evidence>
<accession>B5FFM4</accession>
<gene>
    <name evidence="1" type="primary">recR</name>
    <name type="ordered locus">VFMJ11_1809</name>
</gene>
<proteinExistence type="inferred from homology"/>
<comment type="function">
    <text evidence="1">May play a role in DNA repair. It seems to be involved in an RecBC-independent recombinational process of DNA repair. It may act with RecF and RecO.</text>
</comment>
<comment type="similarity">
    <text evidence="1">Belongs to the RecR family.</text>
</comment>
<name>RECR_ALIFM</name>
<sequence length="200" mass="21654">MRTSGLLEQLMESLRCLPGVGPKSAQRMAFHLLQRNRQGGMQLADALSQAMSEIGHCSECRTFTEEDTCAICLNPKRQASGEMCIVESPADIVAVEATGQFSGRYFVLMGHLSPLDGIGPSDIGLDLLDHRLNRGDIKEVILATNPTVEGEATAHYIAELCQEHQVPASRIAHGVPMGGELELVDGTTLSHSILGRQKLY</sequence>
<feature type="chain" id="PRO_1000089780" description="Recombination protein RecR">
    <location>
        <begin position="1"/>
        <end position="200"/>
    </location>
</feature>
<feature type="domain" description="Toprim" evidence="1">
    <location>
        <begin position="81"/>
        <end position="176"/>
    </location>
</feature>
<feature type="zinc finger region" description="C4-type" evidence="1">
    <location>
        <begin position="57"/>
        <end position="72"/>
    </location>
</feature>